<name>PSBF_TRIEI</name>
<organism>
    <name type="scientific">Trichodesmium erythraeum (strain IMS101)</name>
    <dbReference type="NCBI Taxonomy" id="203124"/>
    <lineage>
        <taxon>Bacteria</taxon>
        <taxon>Bacillati</taxon>
        <taxon>Cyanobacteriota</taxon>
        <taxon>Cyanophyceae</taxon>
        <taxon>Oscillatoriophycideae</taxon>
        <taxon>Oscillatoriales</taxon>
        <taxon>Microcoleaceae</taxon>
        <taxon>Trichodesmium</taxon>
    </lineage>
</organism>
<protein>
    <recommendedName>
        <fullName evidence="1">Cytochrome b559 subunit beta</fullName>
    </recommendedName>
    <alternativeName>
        <fullName evidence="1">PSII reaction center subunit VI</fullName>
    </alternativeName>
</protein>
<sequence>MTSQNPNQPISYPIFTVRWLAVHTLGVPTVFFLGAIAAMQFIQR</sequence>
<reference key="1">
    <citation type="journal article" date="2015" name="Proc. Natl. Acad. Sci. U.S.A.">
        <title>Trichodesmium genome maintains abundant, widespread noncoding DNA in situ, despite oligotrophic lifestyle.</title>
        <authorList>
            <person name="Walworth N."/>
            <person name="Pfreundt U."/>
            <person name="Nelson W.C."/>
            <person name="Mincer T."/>
            <person name="Heidelberg J.F."/>
            <person name="Fu F."/>
            <person name="Waterbury J.B."/>
            <person name="Glavina del Rio T."/>
            <person name="Goodwin L."/>
            <person name="Kyrpides N.C."/>
            <person name="Land M.L."/>
            <person name="Woyke T."/>
            <person name="Hutchins D.A."/>
            <person name="Hess W.R."/>
            <person name="Webb E.A."/>
        </authorList>
    </citation>
    <scope>NUCLEOTIDE SEQUENCE [LARGE SCALE GENOMIC DNA]</scope>
    <source>
        <strain>IMS101</strain>
    </source>
</reference>
<comment type="function">
    <text evidence="1">This b-type cytochrome is tightly associated with the reaction center of photosystem II (PSII). PSII is a light-driven water:plastoquinone oxidoreductase that uses light energy to abstract electrons from H(2)O, generating O(2) and a proton gradient subsequently used for ATP formation. It consists of a core antenna complex that captures photons, and an electron transfer chain that converts photonic excitation into a charge separation.</text>
</comment>
<comment type="cofactor">
    <cofactor evidence="1">
        <name>heme b</name>
        <dbReference type="ChEBI" id="CHEBI:60344"/>
    </cofactor>
    <text evidence="1">With its partner (PsbE) binds heme. PSII binds additional chlorophylls, carotenoids and specific lipids.</text>
</comment>
<comment type="subunit">
    <text evidence="1">Heterodimer of an alpha subunit and a beta subunit. PSII is composed of 1 copy each of membrane proteins PsbA, PsbB, PsbC, PsbD, PsbE, PsbF, PsbH, PsbI, PsbJ, PsbK, PsbL, PsbM, PsbT, PsbX, PsbY, PsbZ, Psb30/Ycf12, peripheral proteins PsbO, CyanoQ (PsbQ), PsbU, PsbV and a large number of cofactors. It forms dimeric complexes.</text>
</comment>
<comment type="subcellular location">
    <subcellularLocation>
        <location evidence="1">Cellular thylakoid membrane</location>
        <topology evidence="1">Single-pass membrane protein</topology>
    </subcellularLocation>
</comment>
<comment type="similarity">
    <text evidence="1">Belongs to the PsbE/PsbF family.</text>
</comment>
<dbReference type="EMBL" id="CP000393">
    <property type="protein sequence ID" value="ABG52595.1"/>
    <property type="molecule type" value="Genomic_DNA"/>
</dbReference>
<dbReference type="RefSeq" id="WP_011612937.1">
    <property type="nucleotide sequence ID" value="NC_008312.1"/>
</dbReference>
<dbReference type="SMR" id="Q10YS9"/>
<dbReference type="STRING" id="203124.Tery_3505"/>
<dbReference type="KEGG" id="ter:Tery_3505"/>
<dbReference type="eggNOG" id="ENOG50332KX">
    <property type="taxonomic scope" value="Bacteria"/>
</dbReference>
<dbReference type="HOGENOM" id="CLU_211753_1_0_3"/>
<dbReference type="OrthoDB" id="532613at2"/>
<dbReference type="GO" id="GO:0009539">
    <property type="term" value="C:photosystem II reaction center"/>
    <property type="evidence" value="ECO:0007669"/>
    <property type="project" value="InterPro"/>
</dbReference>
<dbReference type="GO" id="GO:0031676">
    <property type="term" value="C:plasma membrane-derived thylakoid membrane"/>
    <property type="evidence" value="ECO:0007669"/>
    <property type="project" value="UniProtKB-SubCell"/>
</dbReference>
<dbReference type="GO" id="GO:0009055">
    <property type="term" value="F:electron transfer activity"/>
    <property type="evidence" value="ECO:0007669"/>
    <property type="project" value="UniProtKB-UniRule"/>
</dbReference>
<dbReference type="GO" id="GO:0020037">
    <property type="term" value="F:heme binding"/>
    <property type="evidence" value="ECO:0007669"/>
    <property type="project" value="InterPro"/>
</dbReference>
<dbReference type="GO" id="GO:0005506">
    <property type="term" value="F:iron ion binding"/>
    <property type="evidence" value="ECO:0007669"/>
    <property type="project" value="UniProtKB-UniRule"/>
</dbReference>
<dbReference type="GO" id="GO:0009767">
    <property type="term" value="P:photosynthetic electron transport chain"/>
    <property type="evidence" value="ECO:0007669"/>
    <property type="project" value="InterPro"/>
</dbReference>
<dbReference type="HAMAP" id="MF_00643">
    <property type="entry name" value="PSII_PsbF"/>
    <property type="match status" value="1"/>
</dbReference>
<dbReference type="InterPro" id="IPR006241">
    <property type="entry name" value="PSII_cyt_b559_bsu"/>
</dbReference>
<dbReference type="InterPro" id="IPR006216">
    <property type="entry name" value="PSII_cyt_b559_CS"/>
</dbReference>
<dbReference type="InterPro" id="IPR013081">
    <property type="entry name" value="PSII_cyt_b559_N"/>
</dbReference>
<dbReference type="NCBIfam" id="TIGR01333">
    <property type="entry name" value="cyt_b559_beta"/>
    <property type="match status" value="1"/>
</dbReference>
<dbReference type="Pfam" id="PF00283">
    <property type="entry name" value="Cytochrom_B559"/>
    <property type="match status" value="1"/>
</dbReference>
<dbReference type="PIRSF" id="PIRSF000037">
    <property type="entry name" value="PsbF"/>
    <property type="match status" value="1"/>
</dbReference>
<dbReference type="SUPFAM" id="SSF161045">
    <property type="entry name" value="Cytochrome b559 subunits"/>
    <property type="match status" value="1"/>
</dbReference>
<dbReference type="PROSITE" id="PS00537">
    <property type="entry name" value="CYTOCHROME_B559"/>
    <property type="match status" value="1"/>
</dbReference>
<proteinExistence type="inferred from homology"/>
<keyword id="KW-0249">Electron transport</keyword>
<keyword id="KW-0349">Heme</keyword>
<keyword id="KW-0408">Iron</keyword>
<keyword id="KW-0472">Membrane</keyword>
<keyword id="KW-0479">Metal-binding</keyword>
<keyword id="KW-0602">Photosynthesis</keyword>
<keyword id="KW-0604">Photosystem II</keyword>
<keyword id="KW-0793">Thylakoid</keyword>
<keyword id="KW-0812">Transmembrane</keyword>
<keyword id="KW-1133">Transmembrane helix</keyword>
<keyword id="KW-0813">Transport</keyword>
<gene>
    <name evidence="1" type="primary">psbF</name>
    <name type="ordered locus">Tery_3505</name>
</gene>
<accession>Q10YS9</accession>
<feature type="chain" id="PRO_1000056940" description="Cytochrome b559 subunit beta">
    <location>
        <begin position="1"/>
        <end position="44"/>
    </location>
</feature>
<feature type="transmembrane region" description="Helical" evidence="1">
    <location>
        <begin position="19"/>
        <end position="35"/>
    </location>
</feature>
<feature type="binding site" description="axial binding residue" evidence="1">
    <location>
        <position position="23"/>
    </location>
    <ligand>
        <name>heme</name>
        <dbReference type="ChEBI" id="CHEBI:30413"/>
        <note>ligand shared with alpha subunit</note>
    </ligand>
    <ligandPart>
        <name>Fe</name>
        <dbReference type="ChEBI" id="CHEBI:18248"/>
    </ligandPart>
</feature>
<evidence type="ECO:0000255" key="1">
    <source>
        <dbReference type="HAMAP-Rule" id="MF_00643"/>
    </source>
</evidence>